<accession>A6UVU6</accession>
<comment type="function">
    <text evidence="1">Prenyltransferase that catalyzes the transfer of the geranylgeranyl moiety of geranylgeranyl diphosphate (GGPP) to the C2 hydroxyl of (S)-3-O-geranylgeranylglyceryl phosphate (GGGP). This reaction is the second ether-bond-formation step in the biosynthesis of archaeal membrane lipids.</text>
</comment>
<comment type="catalytic activity">
    <reaction evidence="1">
        <text>sn-3-O-(geranylgeranyl)glycerol 1-phosphate + (2E,6E,10E)-geranylgeranyl diphosphate = 2,3-bis-O-(geranylgeranyl)-sn-glycerol 1-phosphate + diphosphate</text>
        <dbReference type="Rhea" id="RHEA:18109"/>
        <dbReference type="ChEBI" id="CHEBI:33019"/>
        <dbReference type="ChEBI" id="CHEBI:57677"/>
        <dbReference type="ChEBI" id="CHEBI:58756"/>
        <dbReference type="ChEBI" id="CHEBI:58837"/>
        <dbReference type="EC" id="2.5.1.42"/>
    </reaction>
</comment>
<comment type="cofactor">
    <cofactor evidence="1">
        <name>Mg(2+)</name>
        <dbReference type="ChEBI" id="CHEBI:18420"/>
    </cofactor>
</comment>
<comment type="pathway">
    <text evidence="1">Membrane lipid metabolism; glycerophospholipid metabolism.</text>
</comment>
<comment type="subcellular location">
    <subcellularLocation>
        <location evidence="1">Cell membrane</location>
        <topology evidence="1">Multi-pass membrane protein</topology>
    </subcellularLocation>
</comment>
<comment type="similarity">
    <text evidence="1">Belongs to the UbiA prenyltransferase family. DGGGP synthase subfamily.</text>
</comment>
<protein>
    <recommendedName>
        <fullName evidence="1">Digeranylgeranylglyceryl phosphate synthase</fullName>
        <shortName evidence="1">DGGGP synthase</shortName>
        <shortName evidence="1">DGGGPS</shortName>
        <ecNumber evidence="1">2.5.1.42</ecNumber>
    </recommendedName>
    <alternativeName>
        <fullName evidence="1">(S)-2,3-di-O-geranylgeranylglyceryl phosphate synthase</fullName>
    </alternativeName>
    <alternativeName>
        <fullName evidence="1">Geranylgeranylglycerol-phosphate geranylgeranyltransferase</fullName>
    </alternativeName>
</protein>
<evidence type="ECO:0000255" key="1">
    <source>
        <dbReference type="HAMAP-Rule" id="MF_01286"/>
    </source>
</evidence>
<name>DGGGP_META3</name>
<gene>
    <name type="ordered locus">Maeo_1040</name>
</gene>
<feature type="chain" id="PRO_0000350701" description="Digeranylgeranylglyceryl phosphate synthase">
    <location>
        <begin position="1"/>
        <end position="279"/>
    </location>
</feature>
<feature type="transmembrane region" description="Helical" evidence="1">
    <location>
        <begin position="14"/>
        <end position="34"/>
    </location>
</feature>
<feature type="transmembrane region" description="Helical" evidence="1">
    <location>
        <begin position="36"/>
        <end position="56"/>
    </location>
</feature>
<feature type="transmembrane region" description="Helical" evidence="1">
    <location>
        <begin position="94"/>
        <end position="114"/>
    </location>
</feature>
<feature type="transmembrane region" description="Helical" evidence="1">
    <location>
        <begin position="131"/>
        <end position="153"/>
    </location>
</feature>
<feature type="transmembrane region" description="Helical" evidence="1">
    <location>
        <begin position="157"/>
        <end position="175"/>
    </location>
</feature>
<feature type="transmembrane region" description="Helical" evidence="1">
    <location>
        <begin position="201"/>
        <end position="221"/>
    </location>
</feature>
<feature type="transmembrane region" description="Helical" evidence="1">
    <location>
        <begin position="224"/>
        <end position="244"/>
    </location>
</feature>
<feature type="transmembrane region" description="Helical" evidence="1">
    <location>
        <begin position="259"/>
        <end position="279"/>
    </location>
</feature>
<organism>
    <name type="scientific">Methanococcus aeolicus (strain ATCC BAA-1280 / DSM 17508 / OCM 812 / Nankai-3)</name>
    <dbReference type="NCBI Taxonomy" id="419665"/>
    <lineage>
        <taxon>Archaea</taxon>
        <taxon>Methanobacteriati</taxon>
        <taxon>Methanobacteriota</taxon>
        <taxon>Methanomada group</taxon>
        <taxon>Methanococci</taxon>
        <taxon>Methanococcales</taxon>
        <taxon>Methanococcaceae</taxon>
        <taxon>Methanococcus</taxon>
    </lineage>
</organism>
<proteinExistence type="inferred from homology"/>
<reference key="1">
    <citation type="submission" date="2007-06" db="EMBL/GenBank/DDBJ databases">
        <title>Complete sequence of Methanococcus aeolicus Nankai-3.</title>
        <authorList>
            <consortium name="US DOE Joint Genome Institute"/>
            <person name="Copeland A."/>
            <person name="Lucas S."/>
            <person name="Lapidus A."/>
            <person name="Barry K."/>
            <person name="Glavina del Rio T."/>
            <person name="Dalin E."/>
            <person name="Tice H."/>
            <person name="Pitluck S."/>
            <person name="Chain P."/>
            <person name="Malfatti S."/>
            <person name="Shin M."/>
            <person name="Vergez L."/>
            <person name="Schmutz J."/>
            <person name="Larimer F."/>
            <person name="Land M."/>
            <person name="Hauser L."/>
            <person name="Kyrpides N."/>
            <person name="Lykidis A."/>
            <person name="Sieprawska-Lupa M."/>
            <person name="Whitman W.B."/>
            <person name="Richardson P."/>
        </authorList>
    </citation>
    <scope>NUCLEOTIDE SEQUENCE [LARGE SCALE GENOMIC DNA]</scope>
    <source>
        <strain>ATCC BAA-1280 / DSM 17508 / OCM 812 / Nankai-3</strain>
    </source>
</reference>
<sequence>MNLKIKYYLELIRVKNCLTASFGTIIGGLIASNFNFGLIGYILLASLIVFLVCGFGNALNDIQDIEIDKINKPNRPLPSNKISLKSATIFSYLLMISGIIISLFNMICFAIALINSIVLYLYAKKYKRNKIIGNLIVAYLTGSIFIFGGASVGNVEITLILFLCALFATWSREIIKDYEDLDGDKSEGVISLPIKYGKNSIFVAIGFLLCSILLSPLPYILGMFGAPYLMAIMICNVLFILAVLKLLKNPSKEIAGSSSKYIKIIMNLVLLSFVIGSLM</sequence>
<dbReference type="EC" id="2.5.1.42" evidence="1"/>
<dbReference type="EMBL" id="CP000743">
    <property type="protein sequence ID" value="ABR56618.1"/>
    <property type="molecule type" value="Genomic_DNA"/>
</dbReference>
<dbReference type="RefSeq" id="WP_011973750.1">
    <property type="nucleotide sequence ID" value="NC_009635.1"/>
</dbReference>
<dbReference type="SMR" id="A6UVU6"/>
<dbReference type="STRING" id="419665.Maeo_1040"/>
<dbReference type="GeneID" id="5326667"/>
<dbReference type="KEGG" id="mae:Maeo_1040"/>
<dbReference type="eggNOG" id="arCOG00476">
    <property type="taxonomic scope" value="Archaea"/>
</dbReference>
<dbReference type="HOGENOM" id="CLU_073311_1_1_2"/>
<dbReference type="OrthoDB" id="11851at2157"/>
<dbReference type="UniPathway" id="UPA00940"/>
<dbReference type="Proteomes" id="UP000001106">
    <property type="component" value="Chromosome"/>
</dbReference>
<dbReference type="GO" id="GO:0005886">
    <property type="term" value="C:plasma membrane"/>
    <property type="evidence" value="ECO:0007669"/>
    <property type="project" value="UniProtKB-SubCell"/>
</dbReference>
<dbReference type="GO" id="GO:0047295">
    <property type="term" value="F:geranylgeranylglycerol-phosphate geranylgeranyltransferase activity"/>
    <property type="evidence" value="ECO:0007669"/>
    <property type="project" value="UniProtKB-UniRule"/>
</dbReference>
<dbReference type="GO" id="GO:0000287">
    <property type="term" value="F:magnesium ion binding"/>
    <property type="evidence" value="ECO:0007669"/>
    <property type="project" value="UniProtKB-UniRule"/>
</dbReference>
<dbReference type="GO" id="GO:0046474">
    <property type="term" value="P:glycerophospholipid biosynthetic process"/>
    <property type="evidence" value="ECO:0007669"/>
    <property type="project" value="UniProtKB-UniRule"/>
</dbReference>
<dbReference type="CDD" id="cd13961">
    <property type="entry name" value="PT_UbiA_DGGGPS"/>
    <property type="match status" value="1"/>
</dbReference>
<dbReference type="Gene3D" id="1.10.357.140">
    <property type="entry name" value="UbiA prenyltransferase"/>
    <property type="match status" value="1"/>
</dbReference>
<dbReference type="Gene3D" id="1.20.120.1780">
    <property type="entry name" value="UbiA prenyltransferase"/>
    <property type="match status" value="1"/>
</dbReference>
<dbReference type="HAMAP" id="MF_01286">
    <property type="entry name" value="DGGGP_synth"/>
    <property type="match status" value="1"/>
</dbReference>
<dbReference type="InterPro" id="IPR023547">
    <property type="entry name" value="DGGGP_synth"/>
</dbReference>
<dbReference type="InterPro" id="IPR050475">
    <property type="entry name" value="Prenyltransferase_related"/>
</dbReference>
<dbReference type="InterPro" id="IPR000537">
    <property type="entry name" value="UbiA_prenyltransferase"/>
</dbReference>
<dbReference type="InterPro" id="IPR044878">
    <property type="entry name" value="UbiA_sf"/>
</dbReference>
<dbReference type="PANTHER" id="PTHR42723">
    <property type="entry name" value="CHLOROPHYLL SYNTHASE"/>
    <property type="match status" value="1"/>
</dbReference>
<dbReference type="PANTHER" id="PTHR42723:SF1">
    <property type="entry name" value="CHLOROPHYLL SYNTHASE, CHLOROPLASTIC"/>
    <property type="match status" value="1"/>
</dbReference>
<dbReference type="Pfam" id="PF01040">
    <property type="entry name" value="UbiA"/>
    <property type="match status" value="1"/>
</dbReference>
<keyword id="KW-1003">Cell membrane</keyword>
<keyword id="KW-0444">Lipid biosynthesis</keyword>
<keyword id="KW-0443">Lipid metabolism</keyword>
<keyword id="KW-0460">Magnesium</keyword>
<keyword id="KW-0472">Membrane</keyword>
<keyword id="KW-0594">Phospholipid biosynthesis</keyword>
<keyword id="KW-1208">Phospholipid metabolism</keyword>
<keyword id="KW-0808">Transferase</keyword>
<keyword id="KW-0812">Transmembrane</keyword>
<keyword id="KW-1133">Transmembrane helix</keyword>